<name>FAT2_YEAST</name>
<gene>
    <name evidence="8" type="primary">PCS60</name>
    <name evidence="7" type="synonym">AAE3</name>
    <name type="synonym">FAT2</name>
    <name type="ordered locus">YBR222C</name>
    <name type="ORF">YBR1512</name>
</gene>
<proteinExistence type="evidence at protein level"/>
<protein>
    <recommendedName>
        <fullName evidence="9">Oxalate--CoA ligase</fullName>
        <ecNumber evidence="4">6.2.1.8</ecNumber>
    </recommendedName>
    <alternativeName>
        <fullName evidence="7">Acyl-activating enzyme 3</fullName>
    </alternativeName>
    <alternativeName>
        <fullName evidence="7">Oxalyl-CoA synthetase</fullName>
    </alternativeName>
    <alternativeName>
        <fullName evidence="8">Peroxisomal-coenzyme A synthetase</fullName>
    </alternativeName>
</protein>
<comment type="function">
    <text evidence="4">Catalyzes the first step in a degradation pathway of oxalate to CO(2) to protect the cell against the harmful effects of oxalate derived from endogenous processes or an environmental sources.</text>
</comment>
<comment type="catalytic activity">
    <reaction evidence="4">
        <text>oxalate + ATP + CoA = oxalyl-CoA + AMP + diphosphate</text>
        <dbReference type="Rhea" id="RHEA:18293"/>
        <dbReference type="ChEBI" id="CHEBI:30616"/>
        <dbReference type="ChEBI" id="CHEBI:30623"/>
        <dbReference type="ChEBI" id="CHEBI:33019"/>
        <dbReference type="ChEBI" id="CHEBI:57287"/>
        <dbReference type="ChEBI" id="CHEBI:57388"/>
        <dbReference type="ChEBI" id="CHEBI:456215"/>
        <dbReference type="EC" id="6.2.1.8"/>
    </reaction>
</comment>
<comment type="biophysicochemical properties">
    <kinetics>
        <KM evidence="4">20 uM for oxalate</KM>
        <Vmax evidence="4">12.0 umol/min/mg enzyme</Vmax>
    </kinetics>
    <phDependence>
        <text evidence="4">Optimum pH is 7.5.</text>
    </phDependence>
</comment>
<comment type="subunit">
    <text evidence="5">Interacts with PEX5.</text>
</comment>
<comment type="subcellular location">
    <subcellularLocation>
        <location evidence="6">Peroxisome matrix</location>
    </subcellularLocation>
    <subcellularLocation>
        <location evidence="6">Peroxisome membrane</location>
        <topology evidence="6">Peripheral membrane protein</topology>
    </subcellularLocation>
    <text evidence="5">Imported in peroxisome via recognition by the peroxisomal targeting signal receptor PEX5.</text>
</comment>
<comment type="induction">
    <text evidence="6">By oleic acid.</text>
</comment>
<comment type="domain">
    <text evidence="1">The FACS motif is required for catalytic activity and substrate specificity.</text>
</comment>
<comment type="disruption phenotype">
    <text evidence="4">Decreases recovery from exposure to oxalate, to oxalate-secreting microbes, and to oxidative stress.</text>
</comment>
<comment type="miscellaneous">
    <text evidence="3">Present with 8770 molecules/cell in log phase SD medium.</text>
</comment>
<comment type="similarity">
    <text evidence="9">Belongs to the ATP-dependent AMP-binding enzyme family.</text>
</comment>
<organism>
    <name type="scientific">Saccharomyces cerevisiae (strain ATCC 204508 / S288c)</name>
    <name type="common">Baker's yeast</name>
    <dbReference type="NCBI Taxonomy" id="559292"/>
    <lineage>
        <taxon>Eukaryota</taxon>
        <taxon>Fungi</taxon>
        <taxon>Dikarya</taxon>
        <taxon>Ascomycota</taxon>
        <taxon>Saccharomycotina</taxon>
        <taxon>Saccharomycetes</taxon>
        <taxon>Saccharomycetales</taxon>
        <taxon>Saccharomycetaceae</taxon>
        <taxon>Saccharomyces</taxon>
    </lineage>
</organism>
<accession>P38137</accession>
<accession>D6VQL9</accession>
<sequence>MTSAATVTASFNDTFSVSDNVAVIVPETDTQVTYRDLSHMVGHFQTMFTNPNSPLYGAVFRQDTVAISMRNGLEFIVAFLGATMDAKIGAPLNPNYKEKEFNFYLNDLKSKAICVPKGTTKLQSSEILKSASTFGCFIVELAFDATRFRVEYDIYSPEDNYKRVIYRSLNNAKFVNTNPVKFPGFARSSDVALILHTSGTTSTPKTVPLLHLNIVRSTLNIANTYKLTPLDRSYVVMPLFHVHGLIGVLLSTFRTQGSVVVPDGFHPKLFWDQFVKYNCNWFSCVPTISMIMLNMPKPNPFPHIRFIRSCSSALAPATFHKLEKEFNAPVLEAYAMTEASHQMTSNNLPPGKRKPGTVGQPQGVTVVILDDNDNVLPPGKVGEVSIRGENVTLGYANNPKANKENFTKRENYFRTGDQGYFDPEGFLVLTGRIKELINRGGEKISPIELDGIMLSHPKIDEAVAFGVPDDMYGQVVQAAIVLKKGEKMTYEELVNFLKKHLASFKIPTKVYFVDKLPKTATGKIQRRVIAETFAKSSRNKSKL</sequence>
<dbReference type="EC" id="6.2.1.8" evidence="4"/>
<dbReference type="EMBL" id="Z36091">
    <property type="protein sequence ID" value="CAA85185.1"/>
    <property type="molecule type" value="Genomic_DNA"/>
</dbReference>
<dbReference type="EMBL" id="BK006936">
    <property type="protein sequence ID" value="DAA07339.1"/>
    <property type="molecule type" value="Genomic_DNA"/>
</dbReference>
<dbReference type="PIR" id="S46098">
    <property type="entry name" value="S46098"/>
</dbReference>
<dbReference type="RefSeq" id="NP_009781.3">
    <property type="nucleotide sequence ID" value="NM_001178570.3"/>
</dbReference>
<dbReference type="PDB" id="8AFF">
    <property type="method" value="X-ray"/>
    <property type="resolution" value="2.87 A"/>
    <property type="chains" value="A/B/C/D/E/F/G/H/I/J/K/L=1-543"/>
</dbReference>
<dbReference type="PDB" id="8AFG">
    <property type="method" value="X-ray"/>
    <property type="resolution" value="2.45 A"/>
    <property type="chains" value="A/B=1-543"/>
</dbReference>
<dbReference type="PDB" id="8ATD">
    <property type="method" value="EM"/>
    <property type="resolution" value="3.10 A"/>
    <property type="chains" value="A/B/C/D/E/F=6-436"/>
</dbReference>
<dbReference type="PDBsum" id="8AFF"/>
<dbReference type="PDBsum" id="8AFG"/>
<dbReference type="PDBsum" id="8ATD"/>
<dbReference type="EMDB" id="EMD-15646"/>
<dbReference type="SASBDB" id="P38137"/>
<dbReference type="SMR" id="P38137"/>
<dbReference type="BioGRID" id="32919">
    <property type="interactions" value="70"/>
</dbReference>
<dbReference type="DIP" id="DIP-2796N"/>
<dbReference type="FunCoup" id="P38137">
    <property type="interactions" value="788"/>
</dbReference>
<dbReference type="IntAct" id="P38137">
    <property type="interactions" value="18"/>
</dbReference>
<dbReference type="MINT" id="P38137"/>
<dbReference type="STRING" id="4932.YBR222C"/>
<dbReference type="iPTMnet" id="P38137"/>
<dbReference type="PaxDb" id="4932-YBR222C"/>
<dbReference type="PeptideAtlas" id="P38137"/>
<dbReference type="EnsemblFungi" id="YBR222C_mRNA">
    <property type="protein sequence ID" value="YBR222C"/>
    <property type="gene ID" value="YBR222C"/>
</dbReference>
<dbReference type="GeneID" id="852523"/>
<dbReference type="KEGG" id="sce:YBR222C"/>
<dbReference type="AGR" id="SGD:S000000426"/>
<dbReference type="SGD" id="S000000426">
    <property type="gene designation" value="PCS60"/>
</dbReference>
<dbReference type="VEuPathDB" id="FungiDB:YBR222C"/>
<dbReference type="eggNOG" id="KOG1176">
    <property type="taxonomic scope" value="Eukaryota"/>
</dbReference>
<dbReference type="HOGENOM" id="CLU_000022_59_0_1"/>
<dbReference type="InParanoid" id="P38137"/>
<dbReference type="OMA" id="TFRGYYR"/>
<dbReference type="OrthoDB" id="3633556at2759"/>
<dbReference type="BioCyc" id="MetaCyc:G3O-29157-MONOMER"/>
<dbReference type="BioCyc" id="YEAST:G3O-29157-MONOMER"/>
<dbReference type="BRENDA" id="6.2.1.3">
    <property type="organism ID" value="984"/>
</dbReference>
<dbReference type="BRENDA" id="6.2.1.8">
    <property type="organism ID" value="984"/>
</dbReference>
<dbReference type="BioGRID-ORCS" id="852523">
    <property type="hits" value="1 hit in 10 CRISPR screens"/>
</dbReference>
<dbReference type="PRO" id="PR:P38137"/>
<dbReference type="Proteomes" id="UP000002311">
    <property type="component" value="Chromosome II"/>
</dbReference>
<dbReference type="RNAct" id="P38137">
    <property type="molecule type" value="protein"/>
</dbReference>
<dbReference type="GO" id="GO:0005737">
    <property type="term" value="C:cytoplasm"/>
    <property type="evidence" value="ECO:0007005"/>
    <property type="project" value="SGD"/>
</dbReference>
<dbReference type="GO" id="GO:0005782">
    <property type="term" value="C:peroxisomal matrix"/>
    <property type="evidence" value="ECO:0000314"/>
    <property type="project" value="SGD"/>
</dbReference>
<dbReference type="GO" id="GO:0005778">
    <property type="term" value="C:peroxisomal membrane"/>
    <property type="evidence" value="ECO:0000314"/>
    <property type="project" value="SGD"/>
</dbReference>
<dbReference type="GO" id="GO:0005524">
    <property type="term" value="F:ATP binding"/>
    <property type="evidence" value="ECO:0007669"/>
    <property type="project" value="UniProtKB-KW"/>
</dbReference>
<dbReference type="GO" id="GO:0031956">
    <property type="term" value="F:medium-chain fatty acid-CoA ligase activity"/>
    <property type="evidence" value="ECO:0000318"/>
    <property type="project" value="GO_Central"/>
</dbReference>
<dbReference type="GO" id="GO:0003729">
    <property type="term" value="F:mRNA binding"/>
    <property type="evidence" value="ECO:0000314"/>
    <property type="project" value="SGD"/>
</dbReference>
<dbReference type="GO" id="GO:0050203">
    <property type="term" value="F:oxalate-CoA ligase activity"/>
    <property type="evidence" value="ECO:0000314"/>
    <property type="project" value="SGD"/>
</dbReference>
<dbReference type="GO" id="GO:0006631">
    <property type="term" value="P:fatty acid metabolic process"/>
    <property type="evidence" value="ECO:0000318"/>
    <property type="project" value="GO_Central"/>
</dbReference>
<dbReference type="GO" id="GO:0033611">
    <property type="term" value="P:oxalate catabolic process"/>
    <property type="evidence" value="ECO:0000314"/>
    <property type="project" value="SGD"/>
</dbReference>
<dbReference type="CDD" id="cd05926">
    <property type="entry name" value="FACL_fum10p_like"/>
    <property type="match status" value="1"/>
</dbReference>
<dbReference type="FunFam" id="3.30.300.30:FF:000007">
    <property type="entry name" value="4-coumarate--CoA ligase 2"/>
    <property type="match status" value="1"/>
</dbReference>
<dbReference type="FunFam" id="3.40.50.12780:FF:000039">
    <property type="entry name" value="Peroxisomal-coenzyme A synthetase"/>
    <property type="match status" value="1"/>
</dbReference>
<dbReference type="Gene3D" id="3.30.300.30">
    <property type="match status" value="1"/>
</dbReference>
<dbReference type="Gene3D" id="3.40.50.12780">
    <property type="entry name" value="N-terminal domain of ligase-like"/>
    <property type="match status" value="1"/>
</dbReference>
<dbReference type="InterPro" id="IPR025110">
    <property type="entry name" value="AMP-bd_C"/>
</dbReference>
<dbReference type="InterPro" id="IPR045851">
    <property type="entry name" value="AMP-bd_C_sf"/>
</dbReference>
<dbReference type="InterPro" id="IPR020845">
    <property type="entry name" value="AMP-binding_CS"/>
</dbReference>
<dbReference type="InterPro" id="IPR000873">
    <property type="entry name" value="AMP-dep_synth/lig_dom"/>
</dbReference>
<dbReference type="InterPro" id="IPR042099">
    <property type="entry name" value="ANL_N_sf"/>
</dbReference>
<dbReference type="InterPro" id="IPR045310">
    <property type="entry name" value="Pcs60-like"/>
</dbReference>
<dbReference type="PANTHER" id="PTHR43201">
    <property type="entry name" value="ACYL-COA SYNTHETASE"/>
    <property type="match status" value="1"/>
</dbReference>
<dbReference type="PANTHER" id="PTHR43201:SF5">
    <property type="entry name" value="MEDIUM-CHAIN ACYL-COA LIGASE ACSF2, MITOCHONDRIAL"/>
    <property type="match status" value="1"/>
</dbReference>
<dbReference type="Pfam" id="PF00501">
    <property type="entry name" value="AMP-binding"/>
    <property type="match status" value="1"/>
</dbReference>
<dbReference type="Pfam" id="PF13193">
    <property type="entry name" value="AMP-binding_C"/>
    <property type="match status" value="1"/>
</dbReference>
<dbReference type="SUPFAM" id="SSF56801">
    <property type="entry name" value="Acetyl-CoA synthetase-like"/>
    <property type="match status" value="1"/>
</dbReference>
<dbReference type="PROSITE" id="PS00455">
    <property type="entry name" value="AMP_BINDING"/>
    <property type="match status" value="1"/>
</dbReference>
<feature type="chain" id="PRO_0000193182" description="Oxalate--CoA ligase">
    <location>
        <begin position="1"/>
        <end position="543"/>
    </location>
</feature>
<feature type="short sequence motif" description="FACS" evidence="1">
    <location>
        <begin position="410"/>
        <end position="458"/>
    </location>
</feature>
<feature type="short sequence motif" description="C-terminal peroxisome targeting signal (PTS1)" evidence="5">
    <location>
        <begin position="541"/>
        <end position="543"/>
    </location>
</feature>
<feature type="binding site" evidence="2">
    <location>
        <begin position="196"/>
        <end position="207"/>
    </location>
    <ligand>
        <name>ATP</name>
        <dbReference type="ChEBI" id="CHEBI:30616"/>
    </ligand>
</feature>
<feature type="helix" evidence="11">
    <location>
        <begin position="11"/>
        <end position="14"/>
    </location>
</feature>
<feature type="strand" evidence="11">
    <location>
        <begin position="19"/>
        <end position="25"/>
    </location>
</feature>
<feature type="helix" evidence="11">
    <location>
        <begin position="26"/>
        <end position="28"/>
    </location>
</feature>
<feature type="strand" evidence="11">
    <location>
        <begin position="30"/>
        <end position="33"/>
    </location>
</feature>
<feature type="helix" evidence="11">
    <location>
        <begin position="34"/>
        <end position="49"/>
    </location>
</feature>
<feature type="turn" evidence="11">
    <location>
        <begin position="54"/>
        <end position="58"/>
    </location>
</feature>
<feature type="strand" evidence="11">
    <location>
        <begin position="64"/>
        <end position="68"/>
    </location>
</feature>
<feature type="helix" evidence="11">
    <location>
        <begin position="73"/>
        <end position="84"/>
    </location>
</feature>
<feature type="strand" evidence="11">
    <location>
        <begin position="88"/>
        <end position="92"/>
    </location>
</feature>
<feature type="helix" evidence="11">
    <location>
        <begin position="98"/>
        <end position="108"/>
    </location>
</feature>
<feature type="strand" evidence="11">
    <location>
        <begin position="111"/>
        <end position="116"/>
    </location>
</feature>
<feature type="helix" evidence="11">
    <location>
        <begin position="119"/>
        <end position="121"/>
    </location>
</feature>
<feature type="strand" evidence="10">
    <location>
        <begin position="122"/>
        <end position="124"/>
    </location>
</feature>
<feature type="helix" evidence="11">
    <location>
        <begin position="126"/>
        <end position="134"/>
    </location>
</feature>
<feature type="strand" evidence="11">
    <location>
        <begin position="137"/>
        <end position="144"/>
    </location>
</feature>
<feature type="turn" evidence="11">
    <location>
        <begin position="145"/>
        <end position="148"/>
    </location>
</feature>
<feature type="strand" evidence="11">
    <location>
        <begin position="149"/>
        <end position="155"/>
    </location>
</feature>
<feature type="helix" evidence="11">
    <location>
        <begin position="157"/>
        <end position="159"/>
    </location>
</feature>
<feature type="strand" evidence="11">
    <location>
        <begin position="163"/>
        <end position="167"/>
    </location>
</feature>
<feature type="helix" evidence="11">
    <location>
        <begin position="168"/>
        <end position="170"/>
    </location>
</feature>
<feature type="strand" evidence="11">
    <location>
        <begin position="179"/>
        <end position="181"/>
    </location>
</feature>
<feature type="strand" evidence="11">
    <location>
        <begin position="190"/>
        <end position="196"/>
    </location>
</feature>
<feature type="strand" evidence="10">
    <location>
        <begin position="199"/>
        <end position="202"/>
    </location>
</feature>
<feature type="strand" evidence="11">
    <location>
        <begin position="206"/>
        <end position="210"/>
    </location>
</feature>
<feature type="helix" evidence="11">
    <location>
        <begin position="211"/>
        <end position="225"/>
    </location>
</feature>
<feature type="strand" evidence="11">
    <location>
        <begin position="232"/>
        <end position="234"/>
    </location>
</feature>
<feature type="helix" evidence="11">
    <location>
        <begin position="242"/>
        <end position="246"/>
    </location>
</feature>
<feature type="helix" evidence="11">
    <location>
        <begin position="249"/>
        <end position="254"/>
    </location>
</feature>
<feature type="strand" evidence="11">
    <location>
        <begin position="258"/>
        <end position="260"/>
    </location>
</feature>
<feature type="helix" evidence="11">
    <location>
        <begin position="267"/>
        <end position="276"/>
    </location>
</feature>
<feature type="strand" evidence="11">
    <location>
        <begin position="281"/>
        <end position="284"/>
    </location>
</feature>
<feature type="helix" evidence="11">
    <location>
        <begin position="286"/>
        <end position="293"/>
    </location>
</feature>
<feature type="strand" evidence="11">
    <location>
        <begin position="306"/>
        <end position="309"/>
    </location>
</feature>
<feature type="helix" evidence="11">
    <location>
        <begin position="316"/>
        <end position="326"/>
    </location>
</feature>
<feature type="strand" evidence="11">
    <location>
        <begin position="330"/>
        <end position="336"/>
    </location>
</feature>
<feature type="helix" evidence="11">
    <location>
        <begin position="337"/>
        <end position="339"/>
    </location>
</feature>
<feature type="strand" evidence="11">
    <location>
        <begin position="341"/>
        <end position="345"/>
    </location>
</feature>
<feature type="strand" evidence="11">
    <location>
        <begin position="363"/>
        <end position="369"/>
    </location>
</feature>
<feature type="strand" evidence="11">
    <location>
        <begin position="382"/>
        <end position="388"/>
    </location>
</feature>
<feature type="helix" evidence="11">
    <location>
        <begin position="399"/>
        <end position="405"/>
    </location>
</feature>
<feature type="turn" evidence="11">
    <location>
        <begin position="408"/>
        <end position="410"/>
    </location>
</feature>
<feature type="strand" evidence="11">
    <location>
        <begin position="413"/>
        <end position="421"/>
    </location>
</feature>
<feature type="strand" evidence="11">
    <location>
        <begin position="427"/>
        <end position="432"/>
    </location>
</feature>
<feature type="helix" evidence="11">
    <location>
        <begin position="433"/>
        <end position="435"/>
    </location>
</feature>
<feature type="strand" evidence="10">
    <location>
        <begin position="437"/>
        <end position="439"/>
    </location>
</feature>
<feature type="strand" evidence="10">
    <location>
        <begin position="442"/>
        <end position="444"/>
    </location>
</feature>
<feature type="helix" evidence="11">
    <location>
        <begin position="446"/>
        <end position="453"/>
    </location>
</feature>
<feature type="strand" evidence="11">
    <location>
        <begin position="465"/>
        <end position="468"/>
    </location>
</feature>
<feature type="strand" evidence="11">
    <location>
        <begin position="470"/>
        <end position="477"/>
    </location>
</feature>
<feature type="helix" evidence="11">
    <location>
        <begin position="490"/>
        <end position="498"/>
    </location>
</feature>
<feature type="helix" evidence="11">
    <location>
        <begin position="503"/>
        <end position="505"/>
    </location>
</feature>
<feature type="strand" evidence="10">
    <location>
        <begin position="508"/>
        <end position="512"/>
    </location>
</feature>
<feature type="helix" evidence="10">
    <location>
        <begin position="526"/>
        <end position="530"/>
    </location>
</feature>
<evidence type="ECO:0000250" key="1">
    <source>
        <dbReference type="UniProtKB" id="P30624"/>
    </source>
</evidence>
<evidence type="ECO:0000250" key="2">
    <source>
        <dbReference type="UniProtKB" id="P69451"/>
    </source>
</evidence>
<evidence type="ECO:0000269" key="3">
    <source>
    </source>
</evidence>
<evidence type="ECO:0000269" key="4">
    <source>
    </source>
</evidence>
<evidence type="ECO:0000269" key="5">
    <source>
    </source>
</evidence>
<evidence type="ECO:0000269" key="6">
    <source>
    </source>
</evidence>
<evidence type="ECO:0000303" key="7">
    <source>
    </source>
</evidence>
<evidence type="ECO:0000303" key="8">
    <source>
    </source>
</evidence>
<evidence type="ECO:0000305" key="9"/>
<evidence type="ECO:0007829" key="10">
    <source>
        <dbReference type="PDB" id="8AFF"/>
    </source>
</evidence>
<evidence type="ECO:0007829" key="11">
    <source>
        <dbReference type="PDB" id="8AFG"/>
    </source>
</evidence>
<keyword id="KW-0002">3D-structure</keyword>
<keyword id="KW-0067">ATP-binding</keyword>
<keyword id="KW-0903">Direct protein sequencing</keyword>
<keyword id="KW-0436">Ligase</keyword>
<keyword id="KW-0472">Membrane</keyword>
<keyword id="KW-0547">Nucleotide-binding</keyword>
<keyword id="KW-0576">Peroxisome</keyword>
<keyword id="KW-1185">Reference proteome</keyword>
<reference key="1">
    <citation type="journal article" date="1994" name="EMBO J.">
        <title>Complete DNA sequence of yeast chromosome II.</title>
        <authorList>
            <person name="Feldmann H."/>
            <person name="Aigle M."/>
            <person name="Aljinovic G."/>
            <person name="Andre B."/>
            <person name="Baclet M.C."/>
            <person name="Barthe C."/>
            <person name="Baur A."/>
            <person name="Becam A.-M."/>
            <person name="Biteau N."/>
            <person name="Boles E."/>
            <person name="Brandt T."/>
            <person name="Brendel M."/>
            <person name="Brueckner M."/>
            <person name="Bussereau F."/>
            <person name="Christiansen C."/>
            <person name="Contreras R."/>
            <person name="Crouzet M."/>
            <person name="Cziepluch C."/>
            <person name="Demolis N."/>
            <person name="Delaveau T."/>
            <person name="Doignon F."/>
            <person name="Domdey H."/>
            <person name="Duesterhus S."/>
            <person name="Dubois E."/>
            <person name="Dujon B."/>
            <person name="El Bakkoury M."/>
            <person name="Entian K.-D."/>
            <person name="Feuermann M."/>
            <person name="Fiers W."/>
            <person name="Fobo G.M."/>
            <person name="Fritz C."/>
            <person name="Gassenhuber J."/>
            <person name="Glansdorff N."/>
            <person name="Goffeau A."/>
            <person name="Grivell L.A."/>
            <person name="de Haan M."/>
            <person name="Hein C."/>
            <person name="Herbert C.J."/>
            <person name="Hollenberg C.P."/>
            <person name="Holmstroem K."/>
            <person name="Jacq C."/>
            <person name="Jacquet M."/>
            <person name="Jauniaux J.-C."/>
            <person name="Jonniaux J.-L."/>
            <person name="Kallesoee T."/>
            <person name="Kiesau P."/>
            <person name="Kirchrath L."/>
            <person name="Koetter P."/>
            <person name="Korol S."/>
            <person name="Liebl S."/>
            <person name="Logghe M."/>
            <person name="Lohan A.J.E."/>
            <person name="Louis E.J."/>
            <person name="Li Z.Y."/>
            <person name="Maat M.J."/>
            <person name="Mallet L."/>
            <person name="Mannhaupt G."/>
            <person name="Messenguy F."/>
            <person name="Miosga T."/>
            <person name="Molemans F."/>
            <person name="Mueller S."/>
            <person name="Nasr F."/>
            <person name="Obermaier B."/>
            <person name="Perea J."/>
            <person name="Pierard A."/>
            <person name="Piravandi E."/>
            <person name="Pohl F.M."/>
            <person name="Pohl T.M."/>
            <person name="Potier S."/>
            <person name="Proft M."/>
            <person name="Purnelle B."/>
            <person name="Ramezani Rad M."/>
            <person name="Rieger M."/>
            <person name="Rose M."/>
            <person name="Schaaff-Gerstenschlaeger I."/>
            <person name="Scherens B."/>
            <person name="Schwarzlose C."/>
            <person name="Skala J."/>
            <person name="Slonimski P.P."/>
            <person name="Smits P.H.M."/>
            <person name="Souciet J.-L."/>
            <person name="Steensma H.Y."/>
            <person name="Stucka R."/>
            <person name="Urrestarazu L.A."/>
            <person name="van der Aart Q.J.M."/>
            <person name="Van Dyck L."/>
            <person name="Vassarotti A."/>
            <person name="Vetter I."/>
            <person name="Vierendeels F."/>
            <person name="Vissers S."/>
            <person name="Wagner G."/>
            <person name="de Wergifosse P."/>
            <person name="Wolfe K.H."/>
            <person name="Zagulski M."/>
            <person name="Zimmermann F.K."/>
            <person name="Mewes H.-W."/>
            <person name="Kleine K."/>
        </authorList>
    </citation>
    <scope>NUCLEOTIDE SEQUENCE [LARGE SCALE GENOMIC DNA]</scope>
    <source>
        <strain>ATCC 204508 / S288c</strain>
    </source>
</reference>
<reference key="2">
    <citation type="journal article" date="2014" name="G3 (Bethesda)">
        <title>The reference genome sequence of Saccharomyces cerevisiae: Then and now.</title>
        <authorList>
            <person name="Engel S.R."/>
            <person name="Dietrich F.S."/>
            <person name="Fisk D.G."/>
            <person name="Binkley G."/>
            <person name="Balakrishnan R."/>
            <person name="Costanzo M.C."/>
            <person name="Dwight S.S."/>
            <person name="Hitz B.C."/>
            <person name="Karra K."/>
            <person name="Nash R.S."/>
            <person name="Weng S."/>
            <person name="Wong E.D."/>
            <person name="Lloyd P."/>
            <person name="Skrzypek M.S."/>
            <person name="Miyasato S.R."/>
            <person name="Simison M."/>
            <person name="Cherry J.M."/>
        </authorList>
    </citation>
    <scope>GENOME REANNOTATION</scope>
    <source>
        <strain>ATCC 204508 / S288c</strain>
    </source>
</reference>
<reference key="3">
    <citation type="journal article" date="1996" name="Eur. J. Biochem.">
        <title>Identification of a yeast peroxisomal member of the family of AMP-binding proteins.</title>
        <authorList>
            <person name="Blobel F."/>
            <person name="Erdmann R."/>
        </authorList>
    </citation>
    <scope>PARTIAL PROTEIN SEQUENCE</scope>
    <scope>SUBCELLULAR LOCATION</scope>
    <scope>INDUCTION</scope>
    <source>
        <strain>ATCC 204508 / S288c</strain>
    </source>
</reference>
<reference key="4">
    <citation type="journal article" date="2003" name="Nature">
        <title>Global analysis of protein expression in yeast.</title>
        <authorList>
            <person name="Ghaemmaghami S."/>
            <person name="Huh W.-K."/>
            <person name="Bower K."/>
            <person name="Howson R.W."/>
            <person name="Belle A."/>
            <person name="Dephoure N."/>
            <person name="O'Shea E.K."/>
            <person name="Weissman J.S."/>
        </authorList>
    </citation>
    <scope>LEVEL OF PROTEIN EXPRESSION [LARGE SCALE ANALYSIS]</scope>
</reference>
<reference key="5">
    <citation type="journal article" date="2014" name="FEBS Lett.">
        <title>An oxalyl-CoA synthetase is important for oxalate metabolism in Saccharomyces cerevisiae.</title>
        <authorList>
            <person name="Foster J."/>
            <person name="Nakata P.A."/>
        </authorList>
    </citation>
    <scope>FUNCTION</scope>
    <scope>CATALYTIC ACTIVITY</scope>
    <scope>BIOPHYSICOCHEMICAL PROPERTIES</scope>
    <scope>DISRUPTION PHENOTYPE</scope>
</reference>
<reference key="6">
    <citation type="journal article" date="2015" name="J. Biol. Chem.">
        <title>Structural insights into cargo recognition by the yeast PTS1 receptor.</title>
        <authorList>
            <person name="Hagen S."/>
            <person name="Drepper F."/>
            <person name="Fischer S."/>
            <person name="Fodor K."/>
            <person name="Passon D."/>
            <person name="Platta H.W."/>
            <person name="Zenn M."/>
            <person name="Schliebs W."/>
            <person name="Girzalsky W."/>
            <person name="Wilmanns M."/>
            <person name="Warscheid B."/>
            <person name="Erdmann R."/>
        </authorList>
    </citation>
    <scope>INTERACTION WITH PEX5</scope>
</reference>